<protein>
    <recommendedName>
        <fullName>Leukopyrokinin</fullName>
        <shortName>LPK</shortName>
    </recommendedName>
    <alternativeName>
        <fullName>Lem-PK</fullName>
    </alternativeName>
</protein>
<organism>
    <name type="scientific">Rhyparobia maderae</name>
    <name type="common">Madeira cockroach</name>
    <name type="synonym">Leucophaea maderae</name>
    <dbReference type="NCBI Taxonomy" id="36963"/>
    <lineage>
        <taxon>Eukaryota</taxon>
        <taxon>Metazoa</taxon>
        <taxon>Ecdysozoa</taxon>
        <taxon>Arthropoda</taxon>
        <taxon>Hexapoda</taxon>
        <taxon>Insecta</taxon>
        <taxon>Pterygota</taxon>
        <taxon>Neoptera</taxon>
        <taxon>Polyneoptera</taxon>
        <taxon>Dictyoptera</taxon>
        <taxon>Blattodea</taxon>
        <taxon>Blaberoidea</taxon>
        <taxon>Blaberidae</taxon>
        <taxon>Oxyhaloinae</taxon>
        <taxon>Rhyparobia</taxon>
    </lineage>
</organism>
<proteinExistence type="evidence at protein level"/>
<reference key="1">
    <citation type="journal article" date="1986" name="Biochem. Biophys. Res. Commun.">
        <title>Active fragments and analogs of the insect neuropeptide leucopyrokinin: structure-function studies.</title>
        <authorList>
            <person name="Nachman R.J."/>
            <person name="Holman G.M."/>
            <person name="Cook B.J."/>
        </authorList>
    </citation>
    <scope>PROTEIN SEQUENCE</scope>
    <scope>PYROGLUTAMATE FORMATION AT GLN-1</scope>
    <scope>AMIDATION AT LEU-8</scope>
</reference>
<reference key="2">
    <citation type="journal article" date="1986" name="Comp. Biochem. Physiol.">
        <title>Primary structure and synthesis of a blocked myotropic neuropeptide isolated from the cockroach, Leucophaea maderae.</title>
        <authorList>
            <person name="Holman G.M."/>
            <person name="Cook B.J."/>
            <person name="Nachman R.J."/>
        </authorList>
    </citation>
    <scope>PROTEIN SEQUENCE</scope>
    <scope>SYNTHESIS</scope>
    <source>
        <tissue>Head</tissue>
    </source>
</reference>
<keyword id="KW-0027">Amidation</keyword>
<keyword id="KW-0903">Direct protein sequencing</keyword>
<keyword id="KW-0527">Neuropeptide</keyword>
<keyword id="KW-0873">Pyrrolidone carboxylic acid</keyword>
<keyword id="KW-0964">Secreted</keyword>
<evidence type="ECO:0000269" key="1">
    <source>
    </source>
</evidence>
<evidence type="ECO:0000305" key="2"/>
<accession>P13049</accession>
<dbReference type="PIR" id="A23967">
    <property type="entry name" value="A23967"/>
</dbReference>
<dbReference type="GO" id="GO:0005576">
    <property type="term" value="C:extracellular region"/>
    <property type="evidence" value="ECO:0007669"/>
    <property type="project" value="UniProtKB-SubCell"/>
</dbReference>
<dbReference type="GO" id="GO:0007218">
    <property type="term" value="P:neuropeptide signaling pathway"/>
    <property type="evidence" value="ECO:0007669"/>
    <property type="project" value="UniProtKB-KW"/>
</dbReference>
<dbReference type="PROSITE" id="PS00539">
    <property type="entry name" value="PYROKININ"/>
    <property type="match status" value="1"/>
</dbReference>
<feature type="peptide" id="PRO_0000044319" description="Leukopyrokinin">
    <location>
        <begin position="1"/>
        <end position="8"/>
    </location>
</feature>
<feature type="modified residue" description="Pyrrolidone carboxylic acid" evidence="1">
    <location>
        <position position="1"/>
    </location>
</feature>
<feature type="modified residue" description="Leucine amide" evidence="1">
    <location>
        <position position="8"/>
    </location>
</feature>
<name>LPK_RHYMA</name>
<sequence length="8" mass="949">QTSFTPRL</sequence>
<comment type="function">
    <text>Mediates visceral muscle contractile activity (myotropic activity).</text>
</comment>
<comment type="subcellular location">
    <subcellularLocation>
        <location>Secreted</location>
    </subcellularLocation>
</comment>
<comment type="miscellaneous">
    <text>An analog without the N-terminal PCA residue was synthesized and found to exhibit greater activity (144%) than the parent neuropeptide. The portion of the sequence of LPK most critical for the myotropic properties is limited to the pentapeptide fragment FTPRL.</text>
</comment>
<comment type="similarity">
    <text evidence="2">Belongs to the pyrokinin family.</text>
</comment>